<organism>
    <name type="scientific">Nitrosomonas eutropha (strain DSM 101675 / C91 / Nm57)</name>
    <dbReference type="NCBI Taxonomy" id="335283"/>
    <lineage>
        <taxon>Bacteria</taxon>
        <taxon>Pseudomonadati</taxon>
        <taxon>Pseudomonadota</taxon>
        <taxon>Betaproteobacteria</taxon>
        <taxon>Nitrosomonadales</taxon>
        <taxon>Nitrosomonadaceae</taxon>
        <taxon>Nitrosomonas</taxon>
    </lineage>
</organism>
<gene>
    <name evidence="1" type="primary">rpsB</name>
    <name type="ordered locus">Neut_2035</name>
</gene>
<sequence>MSVTMRQMLEAGVHFGHQTRFWNPKMAPYIFGQRNKIHIVNLEHTLVMFRDALDYARRLAANKETILFVGTKRQARDIVKEEAIRCGAPYVNQRWLGGMLTNFKTIRQSIKRLQDMEKMVQDGTLNKLVKKEALDFQRELEKLNASLGGIKEMKGLPDAMFVIDVGYQKGTIIEANKLGIPVVGVVDTNHNPAGIQYVIPGNDDSSQAIRLYARAMADAILEGRNQAIQEIVEIGKTDSEVLSGQDLSADA</sequence>
<accession>Q0AEH4</accession>
<proteinExistence type="inferred from homology"/>
<reference key="1">
    <citation type="journal article" date="2007" name="Environ. Microbiol.">
        <title>Whole-genome analysis of the ammonia-oxidizing bacterium, Nitrosomonas eutropha C91: implications for niche adaptation.</title>
        <authorList>
            <person name="Stein L.Y."/>
            <person name="Arp D.J."/>
            <person name="Berube P.M."/>
            <person name="Chain P.S."/>
            <person name="Hauser L."/>
            <person name="Jetten M.S."/>
            <person name="Klotz M.G."/>
            <person name="Larimer F.W."/>
            <person name="Norton J.M."/>
            <person name="Op den Camp H.J.M."/>
            <person name="Shin M."/>
            <person name="Wei X."/>
        </authorList>
    </citation>
    <scope>NUCLEOTIDE SEQUENCE [LARGE SCALE GENOMIC DNA]</scope>
    <source>
        <strain>DSM 101675 / C91 / Nm57</strain>
    </source>
</reference>
<evidence type="ECO:0000255" key="1">
    <source>
        <dbReference type="HAMAP-Rule" id="MF_00291"/>
    </source>
</evidence>
<evidence type="ECO:0000305" key="2"/>
<name>RS2_NITEC</name>
<dbReference type="EMBL" id="CP000450">
    <property type="protein sequence ID" value="ABI60258.1"/>
    <property type="molecule type" value="Genomic_DNA"/>
</dbReference>
<dbReference type="RefSeq" id="WP_011635055.1">
    <property type="nucleotide sequence ID" value="NC_008344.1"/>
</dbReference>
<dbReference type="SMR" id="Q0AEH4"/>
<dbReference type="STRING" id="335283.Neut_2035"/>
<dbReference type="KEGG" id="net:Neut_2035"/>
<dbReference type="eggNOG" id="COG0052">
    <property type="taxonomic scope" value="Bacteria"/>
</dbReference>
<dbReference type="HOGENOM" id="CLU_040318_1_3_4"/>
<dbReference type="OrthoDB" id="9808036at2"/>
<dbReference type="Proteomes" id="UP000001966">
    <property type="component" value="Chromosome"/>
</dbReference>
<dbReference type="GO" id="GO:0022627">
    <property type="term" value="C:cytosolic small ribosomal subunit"/>
    <property type="evidence" value="ECO:0007669"/>
    <property type="project" value="TreeGrafter"/>
</dbReference>
<dbReference type="GO" id="GO:0003735">
    <property type="term" value="F:structural constituent of ribosome"/>
    <property type="evidence" value="ECO:0007669"/>
    <property type="project" value="InterPro"/>
</dbReference>
<dbReference type="GO" id="GO:0006412">
    <property type="term" value="P:translation"/>
    <property type="evidence" value="ECO:0007669"/>
    <property type="project" value="UniProtKB-UniRule"/>
</dbReference>
<dbReference type="CDD" id="cd01425">
    <property type="entry name" value="RPS2"/>
    <property type="match status" value="1"/>
</dbReference>
<dbReference type="FunFam" id="1.10.287.610:FF:000001">
    <property type="entry name" value="30S ribosomal protein S2"/>
    <property type="match status" value="1"/>
</dbReference>
<dbReference type="Gene3D" id="3.40.50.10490">
    <property type="entry name" value="Glucose-6-phosphate isomerase like protein, domain 1"/>
    <property type="match status" value="1"/>
</dbReference>
<dbReference type="Gene3D" id="1.10.287.610">
    <property type="entry name" value="Helix hairpin bin"/>
    <property type="match status" value="1"/>
</dbReference>
<dbReference type="HAMAP" id="MF_00291_B">
    <property type="entry name" value="Ribosomal_uS2_B"/>
    <property type="match status" value="1"/>
</dbReference>
<dbReference type="InterPro" id="IPR001865">
    <property type="entry name" value="Ribosomal_uS2"/>
</dbReference>
<dbReference type="InterPro" id="IPR005706">
    <property type="entry name" value="Ribosomal_uS2_bac/mit/plastid"/>
</dbReference>
<dbReference type="InterPro" id="IPR018130">
    <property type="entry name" value="Ribosomal_uS2_CS"/>
</dbReference>
<dbReference type="InterPro" id="IPR023591">
    <property type="entry name" value="Ribosomal_uS2_flav_dom_sf"/>
</dbReference>
<dbReference type="NCBIfam" id="TIGR01011">
    <property type="entry name" value="rpsB_bact"/>
    <property type="match status" value="1"/>
</dbReference>
<dbReference type="PANTHER" id="PTHR12534">
    <property type="entry name" value="30S RIBOSOMAL PROTEIN S2 PROKARYOTIC AND ORGANELLAR"/>
    <property type="match status" value="1"/>
</dbReference>
<dbReference type="PANTHER" id="PTHR12534:SF0">
    <property type="entry name" value="SMALL RIBOSOMAL SUBUNIT PROTEIN US2M"/>
    <property type="match status" value="1"/>
</dbReference>
<dbReference type="Pfam" id="PF00318">
    <property type="entry name" value="Ribosomal_S2"/>
    <property type="match status" value="1"/>
</dbReference>
<dbReference type="PRINTS" id="PR00395">
    <property type="entry name" value="RIBOSOMALS2"/>
</dbReference>
<dbReference type="SUPFAM" id="SSF52313">
    <property type="entry name" value="Ribosomal protein S2"/>
    <property type="match status" value="1"/>
</dbReference>
<dbReference type="PROSITE" id="PS00962">
    <property type="entry name" value="RIBOSOMAL_S2_1"/>
    <property type="match status" value="1"/>
</dbReference>
<protein>
    <recommendedName>
        <fullName evidence="1">Small ribosomal subunit protein uS2</fullName>
    </recommendedName>
    <alternativeName>
        <fullName evidence="2">30S ribosomal protein S2</fullName>
    </alternativeName>
</protein>
<comment type="similarity">
    <text evidence="1">Belongs to the universal ribosomal protein uS2 family.</text>
</comment>
<keyword id="KW-0687">Ribonucleoprotein</keyword>
<keyword id="KW-0689">Ribosomal protein</keyword>
<feature type="chain" id="PRO_1000004006" description="Small ribosomal subunit protein uS2">
    <location>
        <begin position="1"/>
        <end position="251"/>
    </location>
</feature>